<evidence type="ECO:0000255" key="1">
    <source>
        <dbReference type="HAMAP-Rule" id="MF_00822"/>
    </source>
</evidence>
<accession>Q9KG58</accession>
<dbReference type="EMBL" id="BA000004">
    <property type="protein sequence ID" value="BAB03974.1"/>
    <property type="molecule type" value="Genomic_DNA"/>
</dbReference>
<dbReference type="PIR" id="G83681">
    <property type="entry name" value="G83681"/>
</dbReference>
<dbReference type="RefSeq" id="WP_010896437.1">
    <property type="nucleotide sequence ID" value="NC_002570.2"/>
</dbReference>
<dbReference type="SMR" id="Q9KG58"/>
<dbReference type="STRING" id="272558.gene:10726100"/>
<dbReference type="KEGG" id="bha:BH0255"/>
<dbReference type="eggNOG" id="COG2371">
    <property type="taxonomic scope" value="Bacteria"/>
</dbReference>
<dbReference type="HOGENOM" id="CLU_093757_3_0_9"/>
<dbReference type="OrthoDB" id="9810882at2"/>
<dbReference type="Proteomes" id="UP000001258">
    <property type="component" value="Chromosome"/>
</dbReference>
<dbReference type="GO" id="GO:0005737">
    <property type="term" value="C:cytoplasm"/>
    <property type="evidence" value="ECO:0007669"/>
    <property type="project" value="UniProtKB-SubCell"/>
</dbReference>
<dbReference type="GO" id="GO:0016151">
    <property type="term" value="F:nickel cation binding"/>
    <property type="evidence" value="ECO:0007669"/>
    <property type="project" value="UniProtKB-UniRule"/>
</dbReference>
<dbReference type="GO" id="GO:0051082">
    <property type="term" value="F:unfolded protein binding"/>
    <property type="evidence" value="ECO:0007669"/>
    <property type="project" value="UniProtKB-UniRule"/>
</dbReference>
<dbReference type="GO" id="GO:0006457">
    <property type="term" value="P:protein folding"/>
    <property type="evidence" value="ECO:0007669"/>
    <property type="project" value="InterPro"/>
</dbReference>
<dbReference type="GO" id="GO:0065003">
    <property type="term" value="P:protein-containing complex assembly"/>
    <property type="evidence" value="ECO:0007669"/>
    <property type="project" value="InterPro"/>
</dbReference>
<dbReference type="GO" id="GO:0019627">
    <property type="term" value="P:urea metabolic process"/>
    <property type="evidence" value="ECO:0007669"/>
    <property type="project" value="InterPro"/>
</dbReference>
<dbReference type="CDD" id="cd00571">
    <property type="entry name" value="UreE"/>
    <property type="match status" value="1"/>
</dbReference>
<dbReference type="Gene3D" id="2.60.260.20">
    <property type="entry name" value="Urease metallochaperone UreE, N-terminal domain"/>
    <property type="match status" value="1"/>
</dbReference>
<dbReference type="Gene3D" id="3.30.70.790">
    <property type="entry name" value="UreE, C-terminal domain"/>
    <property type="match status" value="1"/>
</dbReference>
<dbReference type="HAMAP" id="MF_00822">
    <property type="entry name" value="UreE"/>
    <property type="match status" value="1"/>
</dbReference>
<dbReference type="InterPro" id="IPR012406">
    <property type="entry name" value="UreE"/>
</dbReference>
<dbReference type="InterPro" id="IPR007864">
    <property type="entry name" value="UreE_C_dom"/>
</dbReference>
<dbReference type="InterPro" id="IPR004029">
    <property type="entry name" value="UreE_N"/>
</dbReference>
<dbReference type="InterPro" id="IPR036118">
    <property type="entry name" value="UreE_N_sf"/>
</dbReference>
<dbReference type="Pfam" id="PF05194">
    <property type="entry name" value="UreE_C"/>
    <property type="match status" value="1"/>
</dbReference>
<dbReference type="Pfam" id="PF02814">
    <property type="entry name" value="UreE_N"/>
    <property type="match status" value="1"/>
</dbReference>
<dbReference type="PIRSF" id="PIRSF036402">
    <property type="entry name" value="Ureas_acces_UreE"/>
    <property type="match status" value="1"/>
</dbReference>
<dbReference type="SMART" id="SM00988">
    <property type="entry name" value="UreE_N"/>
    <property type="match status" value="1"/>
</dbReference>
<dbReference type="SUPFAM" id="SSF69737">
    <property type="entry name" value="Urease metallochaperone UreE, C-terminal domain"/>
    <property type="match status" value="1"/>
</dbReference>
<dbReference type="SUPFAM" id="SSF69287">
    <property type="entry name" value="Urease metallochaperone UreE, N-terminal domain"/>
    <property type="match status" value="1"/>
</dbReference>
<comment type="function">
    <text evidence="1">Involved in urease metallocenter assembly. Binds nickel. Probably functions as a nickel donor during metallocenter assembly.</text>
</comment>
<comment type="subcellular location">
    <subcellularLocation>
        <location evidence="1">Cytoplasm</location>
    </subcellularLocation>
</comment>
<comment type="similarity">
    <text evidence="1">Belongs to the UreE family.</text>
</comment>
<proteinExistence type="inferred from homology"/>
<reference key="1">
    <citation type="journal article" date="2000" name="Nucleic Acids Res.">
        <title>Complete genome sequence of the alkaliphilic bacterium Bacillus halodurans and genomic sequence comparison with Bacillus subtilis.</title>
        <authorList>
            <person name="Takami H."/>
            <person name="Nakasone K."/>
            <person name="Takaki Y."/>
            <person name="Maeno G."/>
            <person name="Sasaki R."/>
            <person name="Masui N."/>
            <person name="Fuji F."/>
            <person name="Hirama C."/>
            <person name="Nakamura Y."/>
            <person name="Ogasawara N."/>
            <person name="Kuhara S."/>
            <person name="Horikoshi K."/>
        </authorList>
    </citation>
    <scope>NUCLEOTIDE SEQUENCE [LARGE SCALE GENOMIC DNA]</scope>
    <source>
        <strain>ATCC BAA-125 / DSM 18197 / FERM 7344 / JCM 9153 / C-125</strain>
    </source>
</reference>
<sequence>MYVHSVIGNIEAKTPTKTIEWIELDWDELNKRILRKTTDHGREVAIVMEEQGLTFGDILYEGEDVAIAVRTKLEPAFVIRPKTMKEMGKTAFELGNRHTPCLVENDEIYVRYDSTLAALFNEIGVNYEQTEKRFKQPFKYKGHHHHHD</sequence>
<gene>
    <name evidence="1" type="primary">ureE</name>
    <name type="ordered locus">BH0255</name>
</gene>
<keyword id="KW-0143">Chaperone</keyword>
<keyword id="KW-0963">Cytoplasm</keyword>
<keyword id="KW-0533">Nickel</keyword>
<keyword id="KW-0996">Nickel insertion</keyword>
<keyword id="KW-1185">Reference proteome</keyword>
<name>UREE_HALH5</name>
<feature type="chain" id="PRO_0000223400" description="Urease accessory protein UreE">
    <location>
        <begin position="1"/>
        <end position="148"/>
    </location>
</feature>
<organism>
    <name type="scientific">Halalkalibacterium halodurans (strain ATCC BAA-125 / DSM 18197 / FERM 7344 / JCM 9153 / C-125)</name>
    <name type="common">Bacillus halodurans</name>
    <dbReference type="NCBI Taxonomy" id="272558"/>
    <lineage>
        <taxon>Bacteria</taxon>
        <taxon>Bacillati</taxon>
        <taxon>Bacillota</taxon>
        <taxon>Bacilli</taxon>
        <taxon>Bacillales</taxon>
        <taxon>Bacillaceae</taxon>
        <taxon>Halalkalibacterium (ex Joshi et al. 2022)</taxon>
    </lineage>
</organism>
<protein>
    <recommendedName>
        <fullName evidence="1">Urease accessory protein UreE</fullName>
    </recommendedName>
</protein>